<evidence type="ECO:0000255" key="1">
    <source>
        <dbReference type="HAMAP-Rule" id="MF_00994"/>
    </source>
</evidence>
<evidence type="ECO:0007829" key="2">
    <source>
        <dbReference type="PDB" id="4ZLH"/>
    </source>
</evidence>
<sequence>MLELLFLLLPVAAAYGWYMGRRSAQQNKQDEANRLSRDYVAGVNFLLSNQQDKAVDLFLDMLKEDTGTVEAHLTLGNLFRSRGEVDRAIRIHQTLMESASLTYEQRLLAIQQLGRDYMAAGLYDRAEDMFNQLTDETDFRIGALQQLLQIYQATSEWQKAIDVAERLVKLGKDKQRVEIAHFYCELALQHMASDDLDRAMTLLKKGAAADKNSARVSIMMGRVFMAKGEYAKAVESLQRVISQDRELVSETLEMLQTCYQQLGKTAEWAEFLQRAVEENTGADAELMLADIIEARDGSEAAQVYITRQLQRHPTMRVFHKLMDYHLNEAEEGRAKESLMVLRDMVGEKVRSKPRYRCQKCGFTAYTLYWHCPSCRAWSTIKPIRGLDGL</sequence>
<protein>
    <recommendedName>
        <fullName evidence="1">Lipopolysaccharide assembly protein B</fullName>
    </recommendedName>
</protein>
<gene>
    <name evidence="1" type="primary">lapB</name>
    <name type="synonym">yciM</name>
    <name type="ordered locus">Z2526</name>
    <name type="ordered locus">ECs1853</name>
</gene>
<feature type="chain" id="PRO_0000042575" description="Lipopolysaccharide assembly protein B">
    <location>
        <begin position="1"/>
        <end position="389"/>
    </location>
</feature>
<feature type="transmembrane region" description="Helical" evidence="1">
    <location>
        <begin position="1"/>
        <end position="20"/>
    </location>
</feature>
<feature type="topological domain" description="Cytoplasmic" evidence="1">
    <location>
        <begin position="21"/>
        <end position="389"/>
    </location>
</feature>
<feature type="repeat" description="TPR 1" evidence="1">
    <location>
        <begin position="35"/>
        <end position="68"/>
    </location>
</feature>
<feature type="repeat" description="TPR 2" evidence="1">
    <location>
        <begin position="69"/>
        <end position="102"/>
    </location>
</feature>
<feature type="repeat" description="TPR 3" evidence="1">
    <location>
        <begin position="107"/>
        <end position="140"/>
    </location>
</feature>
<feature type="repeat" description="TPR 4" evidence="1">
    <location>
        <begin position="142"/>
        <end position="174"/>
    </location>
</feature>
<feature type="repeat" description="TPR 5" evidence="1">
    <location>
        <begin position="180"/>
        <end position="213"/>
    </location>
</feature>
<feature type="repeat" description="TPR 6" evidence="1">
    <location>
        <begin position="214"/>
        <end position="247"/>
    </location>
</feature>
<feature type="repeat" description="TPR 7" evidence="1">
    <location>
        <begin position="249"/>
        <end position="282"/>
    </location>
</feature>
<feature type="binding site" evidence="1">
    <location>
        <position position="357"/>
    </location>
    <ligand>
        <name>Fe cation</name>
        <dbReference type="ChEBI" id="CHEBI:24875"/>
    </ligand>
</feature>
<feature type="binding site" evidence="1">
    <location>
        <position position="360"/>
    </location>
    <ligand>
        <name>Fe cation</name>
        <dbReference type="ChEBI" id="CHEBI:24875"/>
    </ligand>
</feature>
<feature type="binding site" evidence="1">
    <location>
        <position position="371"/>
    </location>
    <ligand>
        <name>Fe cation</name>
        <dbReference type="ChEBI" id="CHEBI:24875"/>
    </ligand>
</feature>
<feature type="binding site" evidence="1">
    <location>
        <position position="374"/>
    </location>
    <ligand>
        <name>Fe cation</name>
        <dbReference type="ChEBI" id="CHEBI:24875"/>
    </ligand>
</feature>
<feature type="helix" evidence="2">
    <location>
        <begin position="53"/>
        <end position="66"/>
    </location>
</feature>
<feature type="helix" evidence="2">
    <location>
        <begin position="68"/>
        <end position="82"/>
    </location>
</feature>
<feature type="helix" evidence="2">
    <location>
        <begin position="85"/>
        <end position="96"/>
    </location>
</feature>
<feature type="strand" evidence="2">
    <location>
        <begin position="99"/>
        <end position="101"/>
    </location>
</feature>
<feature type="helix" evidence="2">
    <location>
        <begin position="103"/>
        <end position="120"/>
    </location>
</feature>
<feature type="helix" evidence="2">
    <location>
        <begin position="123"/>
        <end position="131"/>
    </location>
</feature>
<feature type="turn" evidence="2">
    <location>
        <begin position="132"/>
        <end position="135"/>
    </location>
</feature>
<feature type="turn" evidence="2">
    <location>
        <begin position="137"/>
        <end position="139"/>
    </location>
</feature>
<feature type="helix" evidence="2">
    <location>
        <begin position="140"/>
        <end position="153"/>
    </location>
</feature>
<feature type="helix" evidence="2">
    <location>
        <begin position="157"/>
        <end position="168"/>
    </location>
</feature>
<feature type="turn" evidence="2">
    <location>
        <begin position="169"/>
        <end position="171"/>
    </location>
</feature>
<feature type="helix" evidence="2">
    <location>
        <begin position="175"/>
        <end position="191"/>
    </location>
</feature>
<feature type="turn" evidence="2">
    <location>
        <begin position="192"/>
        <end position="194"/>
    </location>
</feature>
<feature type="helix" evidence="2">
    <location>
        <begin position="197"/>
        <end position="209"/>
    </location>
</feature>
<feature type="helix" evidence="2">
    <location>
        <begin position="214"/>
        <end position="226"/>
    </location>
</feature>
<feature type="helix" evidence="2">
    <location>
        <begin position="230"/>
        <end position="237"/>
    </location>
</feature>
<feature type="helix" evidence="2">
    <location>
        <begin position="240"/>
        <end position="243"/>
    </location>
</feature>
<feature type="helix" evidence="2">
    <location>
        <begin position="245"/>
        <end position="251"/>
    </location>
</feature>
<feature type="helix" evidence="2">
    <location>
        <begin position="252"/>
        <end position="261"/>
    </location>
</feature>
<feature type="helix" evidence="2">
    <location>
        <begin position="265"/>
        <end position="277"/>
    </location>
</feature>
<feature type="helix" evidence="2">
    <location>
        <begin position="282"/>
        <end position="311"/>
    </location>
</feature>
<feature type="helix" evidence="2">
    <location>
        <begin position="315"/>
        <end position="328"/>
    </location>
</feature>
<feature type="helix" evidence="2">
    <location>
        <begin position="333"/>
        <end position="351"/>
    </location>
</feature>
<feature type="strand" evidence="2">
    <location>
        <begin position="354"/>
        <end position="357"/>
    </location>
</feature>
<feature type="turn" evidence="2">
    <location>
        <begin position="358"/>
        <end position="360"/>
    </location>
</feature>
<feature type="strand" evidence="2">
    <location>
        <begin position="363"/>
        <end position="366"/>
    </location>
</feature>
<feature type="turn" evidence="2">
    <location>
        <begin position="372"/>
        <end position="374"/>
    </location>
</feature>
<feature type="strand" evidence="2">
    <location>
        <begin position="380"/>
        <end position="382"/>
    </location>
</feature>
<name>LAPB_ECO57</name>
<dbReference type="EMBL" id="AE005174">
    <property type="protein sequence ID" value="AAG56533.1"/>
    <property type="molecule type" value="Genomic_DNA"/>
</dbReference>
<dbReference type="EMBL" id="BA000007">
    <property type="protein sequence ID" value="BAB35276.1"/>
    <property type="molecule type" value="Genomic_DNA"/>
</dbReference>
<dbReference type="PIR" id="A85759">
    <property type="entry name" value="A85759"/>
</dbReference>
<dbReference type="PIR" id="E90860">
    <property type="entry name" value="E90860"/>
</dbReference>
<dbReference type="RefSeq" id="NP_309880.1">
    <property type="nucleotide sequence ID" value="NC_002695.1"/>
</dbReference>
<dbReference type="RefSeq" id="WP_000891353.1">
    <property type="nucleotide sequence ID" value="NZ_VOAI01000015.1"/>
</dbReference>
<dbReference type="PDB" id="4ZLH">
    <property type="method" value="X-ray"/>
    <property type="resolution" value="2.00 A"/>
    <property type="chains" value="A/B=51-389"/>
</dbReference>
<dbReference type="PDBsum" id="4ZLH"/>
<dbReference type="SMR" id="P0AB60"/>
<dbReference type="STRING" id="155864.Z2526"/>
<dbReference type="GeneID" id="912810"/>
<dbReference type="GeneID" id="93775403"/>
<dbReference type="KEGG" id="ece:Z2526"/>
<dbReference type="KEGG" id="ecs:ECs_1853"/>
<dbReference type="PATRIC" id="fig|386585.9.peg.1952"/>
<dbReference type="eggNOG" id="COG2956">
    <property type="taxonomic scope" value="Bacteria"/>
</dbReference>
<dbReference type="HOGENOM" id="CLU_059365_1_0_6"/>
<dbReference type="OMA" id="FWQCPGC"/>
<dbReference type="Proteomes" id="UP000000558">
    <property type="component" value="Chromosome"/>
</dbReference>
<dbReference type="Proteomes" id="UP000002519">
    <property type="component" value="Chromosome"/>
</dbReference>
<dbReference type="GO" id="GO:0009898">
    <property type="term" value="C:cytoplasmic side of plasma membrane"/>
    <property type="evidence" value="ECO:0007669"/>
    <property type="project" value="UniProtKB-UniRule"/>
</dbReference>
<dbReference type="GO" id="GO:0005506">
    <property type="term" value="F:iron ion binding"/>
    <property type="evidence" value="ECO:0007669"/>
    <property type="project" value="UniProtKB-UniRule"/>
</dbReference>
<dbReference type="GO" id="GO:0008653">
    <property type="term" value="P:lipopolysaccharide metabolic process"/>
    <property type="evidence" value="ECO:0007669"/>
    <property type="project" value="InterPro"/>
</dbReference>
<dbReference type="GO" id="GO:0046890">
    <property type="term" value="P:regulation of lipid biosynthetic process"/>
    <property type="evidence" value="ECO:0007669"/>
    <property type="project" value="UniProtKB-UniRule"/>
</dbReference>
<dbReference type="FunFam" id="1.25.40.10:FF:000033">
    <property type="entry name" value="Lipopolysaccharide assembly protein B"/>
    <property type="match status" value="1"/>
</dbReference>
<dbReference type="Gene3D" id="1.25.40.10">
    <property type="entry name" value="Tetratricopeptide repeat domain"/>
    <property type="match status" value="2"/>
</dbReference>
<dbReference type="HAMAP" id="MF_00994">
    <property type="entry name" value="LPS_assembly_LapB"/>
    <property type="match status" value="1"/>
</dbReference>
<dbReference type="InterPro" id="IPR051012">
    <property type="entry name" value="CellSynth/LPSAsmb/PSIAsmb"/>
</dbReference>
<dbReference type="InterPro" id="IPR030865">
    <property type="entry name" value="LapB"/>
</dbReference>
<dbReference type="InterPro" id="IPR041166">
    <property type="entry name" value="Rubredoxin_2"/>
</dbReference>
<dbReference type="InterPro" id="IPR011990">
    <property type="entry name" value="TPR-like_helical_dom_sf"/>
</dbReference>
<dbReference type="InterPro" id="IPR019734">
    <property type="entry name" value="TPR_rpt"/>
</dbReference>
<dbReference type="NCBIfam" id="NF008753">
    <property type="entry name" value="PRK11788.1-1"/>
    <property type="match status" value="1"/>
</dbReference>
<dbReference type="NCBIfam" id="NF008756">
    <property type="entry name" value="PRK11788.1-4"/>
    <property type="match status" value="1"/>
</dbReference>
<dbReference type="NCBIfam" id="NF008757">
    <property type="entry name" value="PRK11788.1-5"/>
    <property type="match status" value="1"/>
</dbReference>
<dbReference type="PANTHER" id="PTHR45586:SF1">
    <property type="entry name" value="LIPOPOLYSACCHARIDE ASSEMBLY PROTEIN B"/>
    <property type="match status" value="1"/>
</dbReference>
<dbReference type="PANTHER" id="PTHR45586">
    <property type="entry name" value="TPR REPEAT-CONTAINING PROTEIN PA4667"/>
    <property type="match status" value="1"/>
</dbReference>
<dbReference type="Pfam" id="PF14559">
    <property type="entry name" value="TPR_19"/>
    <property type="match status" value="1"/>
</dbReference>
<dbReference type="Pfam" id="PF13176">
    <property type="entry name" value="TPR_7"/>
    <property type="match status" value="1"/>
</dbReference>
<dbReference type="Pfam" id="PF18073">
    <property type="entry name" value="Zn_ribbon_LapB"/>
    <property type="match status" value="1"/>
</dbReference>
<dbReference type="SMART" id="SM00028">
    <property type="entry name" value="TPR"/>
    <property type="match status" value="5"/>
</dbReference>
<dbReference type="SUPFAM" id="SSF48452">
    <property type="entry name" value="TPR-like"/>
    <property type="match status" value="2"/>
</dbReference>
<dbReference type="PROSITE" id="PS50005">
    <property type="entry name" value="TPR"/>
    <property type="match status" value="6"/>
</dbReference>
<dbReference type="PROSITE" id="PS50293">
    <property type="entry name" value="TPR_REGION"/>
    <property type="match status" value="1"/>
</dbReference>
<reference key="1">
    <citation type="journal article" date="2001" name="Nature">
        <title>Genome sequence of enterohaemorrhagic Escherichia coli O157:H7.</title>
        <authorList>
            <person name="Perna N.T."/>
            <person name="Plunkett G. III"/>
            <person name="Burland V."/>
            <person name="Mau B."/>
            <person name="Glasner J.D."/>
            <person name="Rose D.J."/>
            <person name="Mayhew G.F."/>
            <person name="Evans P.S."/>
            <person name="Gregor J."/>
            <person name="Kirkpatrick H.A."/>
            <person name="Posfai G."/>
            <person name="Hackett J."/>
            <person name="Klink S."/>
            <person name="Boutin A."/>
            <person name="Shao Y."/>
            <person name="Miller L."/>
            <person name="Grotbeck E.J."/>
            <person name="Davis N.W."/>
            <person name="Lim A."/>
            <person name="Dimalanta E.T."/>
            <person name="Potamousis K."/>
            <person name="Apodaca J."/>
            <person name="Anantharaman T.S."/>
            <person name="Lin J."/>
            <person name="Yen G."/>
            <person name="Schwartz D.C."/>
            <person name="Welch R.A."/>
            <person name="Blattner F.R."/>
        </authorList>
    </citation>
    <scope>NUCLEOTIDE SEQUENCE [LARGE SCALE GENOMIC DNA]</scope>
    <source>
        <strain>O157:H7 / EDL933 / ATCC 700927 / EHEC</strain>
    </source>
</reference>
<reference key="2">
    <citation type="journal article" date="2001" name="DNA Res.">
        <title>Complete genome sequence of enterohemorrhagic Escherichia coli O157:H7 and genomic comparison with a laboratory strain K-12.</title>
        <authorList>
            <person name="Hayashi T."/>
            <person name="Makino K."/>
            <person name="Ohnishi M."/>
            <person name="Kurokawa K."/>
            <person name="Ishii K."/>
            <person name="Yokoyama K."/>
            <person name="Han C.-G."/>
            <person name="Ohtsubo E."/>
            <person name="Nakayama K."/>
            <person name="Murata T."/>
            <person name="Tanaka M."/>
            <person name="Tobe T."/>
            <person name="Iida T."/>
            <person name="Takami H."/>
            <person name="Honda T."/>
            <person name="Sasakawa C."/>
            <person name="Ogasawara N."/>
            <person name="Yasunaga T."/>
            <person name="Kuhara S."/>
            <person name="Shiba T."/>
            <person name="Hattori M."/>
            <person name="Shinagawa H."/>
        </authorList>
    </citation>
    <scope>NUCLEOTIDE SEQUENCE [LARGE SCALE GENOMIC DNA]</scope>
    <source>
        <strain>O157:H7 / Sakai / RIMD 0509952 / EHEC</strain>
    </source>
</reference>
<comment type="function">
    <text evidence="1">Modulates cellular lipopolysaccharide (LPS) levels by regulating LpxC, which is involved in lipid A biosynthesis. May act by modulating the proteolytic activity of FtsH towards LpxC. May also coordinate assembly of proteins involved in LPS synthesis at the plasma membrane.</text>
</comment>
<comment type="subcellular location">
    <subcellularLocation>
        <location evidence="1">Cell inner membrane</location>
        <topology evidence="1">Single-pass membrane protein</topology>
        <orientation evidence="1">Cytoplasmic side</orientation>
    </subcellularLocation>
</comment>
<comment type="similarity">
    <text evidence="1">Belongs to the LapB family.</text>
</comment>
<proteinExistence type="evidence at protein level"/>
<keyword id="KW-0002">3D-structure</keyword>
<keyword id="KW-0997">Cell inner membrane</keyword>
<keyword id="KW-1003">Cell membrane</keyword>
<keyword id="KW-0408">Iron</keyword>
<keyword id="KW-0472">Membrane</keyword>
<keyword id="KW-0479">Metal-binding</keyword>
<keyword id="KW-1185">Reference proteome</keyword>
<keyword id="KW-0677">Repeat</keyword>
<keyword id="KW-0802">TPR repeat</keyword>
<keyword id="KW-0812">Transmembrane</keyword>
<keyword id="KW-1133">Transmembrane helix</keyword>
<accession>P0AB60</accession>
<accession>P45576</accession>
<accession>P76836</accession>
<organism>
    <name type="scientific">Escherichia coli O157:H7</name>
    <dbReference type="NCBI Taxonomy" id="83334"/>
    <lineage>
        <taxon>Bacteria</taxon>
        <taxon>Pseudomonadati</taxon>
        <taxon>Pseudomonadota</taxon>
        <taxon>Gammaproteobacteria</taxon>
        <taxon>Enterobacterales</taxon>
        <taxon>Enterobacteriaceae</taxon>
        <taxon>Escherichia</taxon>
    </lineage>
</organism>